<accession>A3KN46</accession>
<protein>
    <recommendedName>
        <fullName evidence="2">LETM1 domain-containing protein 1</fullName>
    </recommendedName>
</protein>
<sequence>MALSRVCWARAALWGSAVPPGLYVVRRLQFVRSGLTWGAPRSSKLHLSPKADVKSLISYVVTKTKVINGKYHRFLGRHFPRFYVPYTIFMKGLQMLWADGKKARRIKTNMWKHNIKFHQLPYREMEHLRQFRRDVTKCLFLGILSIPPFANYLVFLLMYLFPRQLLIRHFWTPKQQIDFLDIYHALRKQSHPEILCYLEKVVPLISDAGLQWHMTELCTKMQRGTHPAVHDILALRECFANHPLGMDQLRALQMKALCRAMLLTPYLPSVLLRHRLKTHTTVIHQLDKALAKLGVGQLTAQEVKSACYLRGLNSTHIAEERCRTWLGEWLQISCSLKETELSLLLHNVVLLSINYVGSRR</sequence>
<proteinExistence type="evidence at transcript level"/>
<organism>
    <name type="scientific">Bos taurus</name>
    <name type="common">Bovine</name>
    <dbReference type="NCBI Taxonomy" id="9913"/>
    <lineage>
        <taxon>Eukaryota</taxon>
        <taxon>Metazoa</taxon>
        <taxon>Chordata</taxon>
        <taxon>Craniata</taxon>
        <taxon>Vertebrata</taxon>
        <taxon>Euteleostomi</taxon>
        <taxon>Mammalia</taxon>
        <taxon>Eutheria</taxon>
        <taxon>Laurasiatheria</taxon>
        <taxon>Artiodactyla</taxon>
        <taxon>Ruminantia</taxon>
        <taxon>Pecora</taxon>
        <taxon>Bovidae</taxon>
        <taxon>Bovinae</taxon>
        <taxon>Bos</taxon>
    </lineage>
</organism>
<comment type="function">
    <text evidence="2 3">Plays an essential role for mitochondrial structure and function, as well as thermogenesis of brown adipocytes. In brown adipose tissue also localizes in the nucleus where it interacts with the chromatin remodeler SMARCA4 to regulate thermogenic genes expression, such as UCP1 (By similarity). May regulate phagocytosis and inflammatory responses to lipopolysaccharide in macrophages (By similarity). Involved in tumorigenesis and may function as a negative regulator of the p53/TP53 (By similarity).</text>
</comment>
<comment type="subunit">
    <text evidence="2 3">Interacts with BRI3BP. Interacts (via C-terminal) with SMARCA4; the interaction regulates transcriptional expression of thermogenic genes in brown adipose tissue.</text>
</comment>
<comment type="subcellular location">
    <subcellularLocation>
        <location evidence="2">Mitochondrion outer membrane</location>
        <topology evidence="2">Single-pass membrane protein</topology>
    </subcellularLocation>
    <subcellularLocation>
        <location evidence="3">Nucleus</location>
    </subcellularLocation>
    <subcellularLocation>
        <location evidence="3">Mitochondrion inner membrane</location>
        <topology evidence="4">Single-pass membrane protein</topology>
    </subcellularLocation>
</comment>
<evidence type="ECO:0000250" key="1"/>
<evidence type="ECO:0000250" key="2">
    <source>
        <dbReference type="UniProtKB" id="Q6P1Q0"/>
    </source>
</evidence>
<evidence type="ECO:0000250" key="3">
    <source>
        <dbReference type="UniProtKB" id="Q924L1"/>
    </source>
</evidence>
<evidence type="ECO:0000255" key="4"/>
<evidence type="ECO:0000255" key="5">
    <source>
        <dbReference type="PROSITE-ProRule" id="PRU01094"/>
    </source>
</evidence>
<keyword id="KW-0472">Membrane</keyword>
<keyword id="KW-0496">Mitochondrion</keyword>
<keyword id="KW-0999">Mitochondrion inner membrane</keyword>
<keyword id="KW-1000">Mitochondrion outer membrane</keyword>
<keyword id="KW-0539">Nucleus</keyword>
<keyword id="KW-1185">Reference proteome</keyword>
<keyword id="KW-0812">Transmembrane</keyword>
<keyword id="KW-1133">Transmembrane helix</keyword>
<feature type="chain" id="PRO_0000310418" description="LETM1 domain-containing protein 1">
    <location>
        <begin position="1"/>
        <end position="360"/>
    </location>
</feature>
<feature type="topological domain" description="Cytoplasmic" evidence="4">
    <location>
        <begin position="1"/>
        <end position="137"/>
    </location>
</feature>
<feature type="transmembrane region" description="Helical" evidence="4">
    <location>
        <begin position="138"/>
        <end position="158"/>
    </location>
</feature>
<feature type="topological domain" description="Mitochondrial intermembrane" evidence="4">
    <location>
        <begin position="159"/>
        <end position="360"/>
    </location>
</feature>
<feature type="domain" description="Letm1 RBD" evidence="5">
    <location>
        <begin position="186"/>
        <end position="360"/>
    </location>
</feature>
<feature type="region of interest" description="Required and sufficient for mitochondrial import" evidence="1">
    <location>
        <begin position="1"/>
        <end position="110"/>
    </location>
</feature>
<dbReference type="EMBL" id="BC133596">
    <property type="protein sequence ID" value="AAI33597.1"/>
    <property type="molecule type" value="mRNA"/>
</dbReference>
<dbReference type="RefSeq" id="NP_001076899.1">
    <property type="nucleotide sequence ID" value="NM_001083430.1"/>
</dbReference>
<dbReference type="SMR" id="A3KN46"/>
<dbReference type="FunCoup" id="A3KN46">
    <property type="interactions" value="2362"/>
</dbReference>
<dbReference type="STRING" id="9913.ENSBTAP00000038354"/>
<dbReference type="PaxDb" id="9913-ENSBTAP00000038354"/>
<dbReference type="GeneID" id="514595"/>
<dbReference type="KEGG" id="bta:514595"/>
<dbReference type="CTD" id="25875"/>
<dbReference type="eggNOG" id="KOG4263">
    <property type="taxonomic scope" value="Eukaryota"/>
</dbReference>
<dbReference type="InParanoid" id="A3KN46"/>
<dbReference type="OrthoDB" id="73691at2759"/>
<dbReference type="Proteomes" id="UP000009136">
    <property type="component" value="Unplaced"/>
</dbReference>
<dbReference type="GO" id="GO:0005743">
    <property type="term" value="C:mitochondrial inner membrane"/>
    <property type="evidence" value="ECO:0007669"/>
    <property type="project" value="UniProtKB-SubCell"/>
</dbReference>
<dbReference type="GO" id="GO:0005741">
    <property type="term" value="C:mitochondrial outer membrane"/>
    <property type="evidence" value="ECO:0007669"/>
    <property type="project" value="UniProtKB-SubCell"/>
</dbReference>
<dbReference type="GO" id="GO:0005739">
    <property type="term" value="C:mitochondrion"/>
    <property type="evidence" value="ECO:0000318"/>
    <property type="project" value="GO_Central"/>
</dbReference>
<dbReference type="GO" id="GO:0005634">
    <property type="term" value="C:nucleus"/>
    <property type="evidence" value="ECO:0007669"/>
    <property type="project" value="UniProtKB-SubCell"/>
</dbReference>
<dbReference type="GO" id="GO:0043022">
    <property type="term" value="F:ribosome binding"/>
    <property type="evidence" value="ECO:0007669"/>
    <property type="project" value="InterPro"/>
</dbReference>
<dbReference type="GO" id="GO:0007005">
    <property type="term" value="P:mitochondrion organization"/>
    <property type="evidence" value="ECO:0000250"/>
    <property type="project" value="UniProtKB"/>
</dbReference>
<dbReference type="InterPro" id="IPR033122">
    <property type="entry name" value="LETM1-like_RBD"/>
</dbReference>
<dbReference type="InterPro" id="IPR044202">
    <property type="entry name" value="LETM1/MDM38-like"/>
</dbReference>
<dbReference type="PANTHER" id="PTHR14009:SF13">
    <property type="entry name" value="LETM1 DOMAIN-CONTAINING PROTEIN 1"/>
    <property type="match status" value="1"/>
</dbReference>
<dbReference type="PANTHER" id="PTHR14009">
    <property type="entry name" value="LEUCINE ZIPPER-EF-HAND CONTAINING TRANSMEMBRANE PROTEIN"/>
    <property type="match status" value="1"/>
</dbReference>
<dbReference type="Pfam" id="PF07766">
    <property type="entry name" value="LETM1_RBD"/>
    <property type="match status" value="1"/>
</dbReference>
<dbReference type="PROSITE" id="PS51758">
    <property type="entry name" value="LETM1_RBD"/>
    <property type="match status" value="1"/>
</dbReference>
<name>LTMD1_BOVIN</name>
<reference key="1">
    <citation type="submission" date="2007-02" db="EMBL/GenBank/DDBJ databases">
        <authorList>
            <consortium name="NIH - Mammalian Gene Collection (MGC) project"/>
        </authorList>
    </citation>
    <scope>NUCLEOTIDE SEQUENCE [LARGE SCALE MRNA]</scope>
    <source>
        <strain>Hereford</strain>
        <tissue>Thymus</tissue>
    </source>
</reference>
<gene>
    <name evidence="2" type="primary">LETMD1</name>
</gene>